<protein>
    <recommendedName>
        <fullName evidence="4">Cholesterol ring-cleaving hydrolase IpdB subunit</fullName>
        <ecNumber evidence="2">4.1.99.-</ecNumber>
    </recommendedName>
    <alternativeName>
        <fullName evidence="4">(3E)-2-(2-carboxylatoethyl)-3-methyl-6-oxocyclohex-1-ene-1-carboxyl-CoA hydrolase beta subunit</fullName>
        <shortName evidence="4">COCHEA-CoA hydrolase beta subunit</shortName>
    </alternativeName>
</protein>
<accession>Q0S7Q0</accession>
<proteinExistence type="evidence at protein level"/>
<organism>
    <name type="scientific">Rhodococcus jostii (strain RHA1)</name>
    <dbReference type="NCBI Taxonomy" id="101510"/>
    <lineage>
        <taxon>Bacteria</taxon>
        <taxon>Bacillati</taxon>
        <taxon>Actinomycetota</taxon>
        <taxon>Actinomycetes</taxon>
        <taxon>Mycobacteriales</taxon>
        <taxon>Nocardiaceae</taxon>
        <taxon>Rhodococcus</taxon>
    </lineage>
</organism>
<sequence>MSETITEVTRAEYCAIACADIFSGAGEIMASPMATLPLIGARLARLTTEPDLLITDGEALIFADTPAVGAKAPIEGWMPFRKVFDVVASGRRHVVMGANQIDRHGNQNLSAFGPLQQPTRQMFGVRGAPGNTINHPTSYWVGKHTSRVFCDTVDIVSGVGYDQIDPENPAYRFHHLHRVVSNLGVFDFGGPDHTFRALSLHPGVTADQVADNTSFEVAGLADAGVTREPTDEELRLIREVLDPRSLRDREVSV</sequence>
<reference key="1">
    <citation type="journal article" date="2006" name="Proc. Natl. Acad. Sci. U.S.A.">
        <title>The complete genome of Rhodococcus sp. RHA1 provides insights into a catabolic powerhouse.</title>
        <authorList>
            <person name="McLeod M.P."/>
            <person name="Warren R.L."/>
            <person name="Hsiao W.W.L."/>
            <person name="Araki N."/>
            <person name="Myhre M."/>
            <person name="Fernandes C."/>
            <person name="Miyazawa D."/>
            <person name="Wong W."/>
            <person name="Lillquist A.L."/>
            <person name="Wang D."/>
            <person name="Dosanjh M."/>
            <person name="Hara H."/>
            <person name="Petrescu A."/>
            <person name="Morin R.D."/>
            <person name="Yang G."/>
            <person name="Stott J.M."/>
            <person name="Schein J.E."/>
            <person name="Shin H."/>
            <person name="Smailus D."/>
            <person name="Siddiqui A.S."/>
            <person name="Marra M.A."/>
            <person name="Jones S.J.M."/>
            <person name="Holt R."/>
            <person name="Brinkman F.S.L."/>
            <person name="Miyauchi K."/>
            <person name="Fukuda M."/>
            <person name="Davies J.E."/>
            <person name="Mohn W.W."/>
            <person name="Eltis L.D."/>
        </authorList>
    </citation>
    <scope>NUCLEOTIDE SEQUENCE [LARGE SCALE GENOMIC DNA]</scope>
    <source>
        <strain>RHA1</strain>
    </source>
</reference>
<reference key="2">
    <citation type="journal article" date="2017" name="MBio">
        <title>Catabolism of the last two steroid rings in Mycobacterium tuberculosis and other bacteria.</title>
        <authorList>
            <person name="Crowe A.M."/>
            <person name="Casabon I."/>
            <person name="Brown K.L."/>
            <person name="Liu J."/>
            <person name="Lian J."/>
            <person name="Rogalski J.C."/>
            <person name="Hurst T.E."/>
            <person name="Snieckus V."/>
            <person name="Foster L.J."/>
            <person name="Eltis L.D."/>
        </authorList>
    </citation>
    <scope>FUNCTION</scope>
    <scope>PATHWAY</scope>
    <scope>DISRUPTION PHENOTYPE</scope>
    <source>
        <strain>RHA1</strain>
    </source>
</reference>
<reference evidence="7 8 9" key="3">
    <citation type="journal article" date="2018" name="Proc. Natl. Acad. Sci. U.S.A.">
        <title>IpdAB, a virulence factor in Mycobacterium tuberculosis, is a cholesterol ring-cleaving hydrolase.</title>
        <authorList>
            <person name="Crowe A.M."/>
            <person name="Workman S.D."/>
            <person name="Watanabe N."/>
            <person name="Worrall L.J."/>
            <person name="Strynadka N.C.J."/>
            <person name="Eltis L.D."/>
        </authorList>
    </citation>
    <scope>X-RAY CRYSTALLOGRAPHY (1.40 ANGSTROMS) IN COMPLEXES WITH IPDB AND COCHEA-COA</scope>
    <scope>FUNCTION</scope>
    <scope>CATALYTIC ACTIVITY</scope>
    <scope>BIOPHYSICOCHEMICAL PROPERTIES</scope>
    <scope>SUBUNIT</scope>
    <scope>MUTAGENESIS OF GLU-58; ARG-92 AND ARG-126</scope>
</reference>
<name>IPDB_RHOJR</name>
<comment type="function">
    <text evidence="1 2 5">Involved in the final steps of cholesterol and steroid degradation (PubMed:28377529, PubMed:29581275). Opens the last steroid ring of cholesterol by catalyzing the hydrolysis of (3E)-2-(2-carboxylatoethyl)-3-methyl-6-oxocyclohex-1-ene-1-carboxyl-CoA (COCHEA-CoA) to 6-methyl-3,7-dioxodecanedioyl-CoA (MeDODA-CoA) (Probable) (PubMed:29581275).</text>
</comment>
<comment type="catalytic activity">
    <reaction evidence="2">
        <text>(3E)-2-(2-carboxylatoethyl)-3-methyl-6-oxocyclohex-1-ene-1-carboxyl-CoA + H2O = 6-methyl-3,7-dioxodecanedioyl-CoA</text>
        <dbReference type="Rhea" id="RHEA:66364"/>
        <dbReference type="ChEBI" id="CHEBI:15377"/>
        <dbReference type="ChEBI" id="CHEBI:167101"/>
        <dbReference type="ChEBI" id="CHEBI:167102"/>
    </reaction>
    <physiologicalReaction direction="left-to-right" evidence="2">
        <dbReference type="Rhea" id="RHEA:66365"/>
    </physiologicalReaction>
</comment>
<comment type="biophysicochemical properties">
    <kinetics>
        <KM evidence="2">120 uM for COCHEA-CoA</KM>
        <text evidence="2">kcat is 5.8 sec(-1) with COCHEA-CoA as substrate.</text>
    </kinetics>
</comment>
<comment type="pathway">
    <text evidence="1">Steroid metabolism; cholesterol degradation.</text>
</comment>
<comment type="subunit">
    <text evidence="2">Heterotetramer composed of 2 IpdA subunits and 2 IpdB subunits.</text>
</comment>
<comment type="disruption phenotype">
    <text evidence="1">IpdAB double deletion mutant does not grow on cholesterol or HIP, but grows as the wild-type on pyruvate. In the presence of cholesterol, ipdAB double deletion mutant accumulates COCHEA-CoA.</text>
</comment>
<comment type="similarity">
    <text evidence="4">Belongs to the 3-oxoacid CoA-transferase subunit B family.</text>
</comment>
<keyword id="KW-0002">3D-structure</keyword>
<keyword id="KW-0153">Cholesterol metabolism</keyword>
<keyword id="KW-0443">Lipid metabolism</keyword>
<keyword id="KW-0456">Lyase</keyword>
<keyword id="KW-0753">Steroid metabolism</keyword>
<keyword id="KW-1207">Sterol metabolism</keyword>
<evidence type="ECO:0000269" key="1">
    <source>
    </source>
</evidence>
<evidence type="ECO:0000269" key="2">
    <source>
    </source>
</evidence>
<evidence type="ECO:0000303" key="3">
    <source>
    </source>
</evidence>
<evidence type="ECO:0000305" key="4"/>
<evidence type="ECO:0000305" key="5">
    <source>
    </source>
</evidence>
<evidence type="ECO:0000312" key="6">
    <source>
        <dbReference type="EMBL" id="ABG96436.1"/>
    </source>
</evidence>
<evidence type="ECO:0007744" key="7">
    <source>
        <dbReference type="PDB" id="6CO6"/>
    </source>
</evidence>
<evidence type="ECO:0007744" key="8">
    <source>
        <dbReference type="PDB" id="6CO9"/>
    </source>
</evidence>
<evidence type="ECO:0007744" key="9">
    <source>
        <dbReference type="PDB" id="6COJ"/>
    </source>
</evidence>
<evidence type="ECO:0007829" key="10">
    <source>
        <dbReference type="PDB" id="6COJ"/>
    </source>
</evidence>
<dbReference type="EC" id="4.1.99.-" evidence="2"/>
<dbReference type="EMBL" id="CP000431">
    <property type="protein sequence ID" value="ABG96436.1"/>
    <property type="molecule type" value="Genomic_DNA"/>
</dbReference>
<dbReference type="RefSeq" id="WP_011597004.1">
    <property type="nucleotide sequence ID" value="NC_008268.1"/>
</dbReference>
<dbReference type="PDB" id="6CO6">
    <property type="method" value="X-ray"/>
    <property type="resolution" value="1.70 A"/>
    <property type="chains" value="B=1-253"/>
</dbReference>
<dbReference type="PDB" id="6CO9">
    <property type="method" value="X-ray"/>
    <property type="resolution" value="1.60 A"/>
    <property type="chains" value="B=1-253"/>
</dbReference>
<dbReference type="PDB" id="6COJ">
    <property type="method" value="X-ray"/>
    <property type="resolution" value="1.40 A"/>
    <property type="chains" value="B=1-253"/>
</dbReference>
<dbReference type="PDBsum" id="6CO6"/>
<dbReference type="PDBsum" id="6CO9"/>
<dbReference type="PDBsum" id="6COJ"/>
<dbReference type="SMR" id="Q0S7Q0"/>
<dbReference type="KEGG" id="rha:RHA1_ro04650"/>
<dbReference type="PATRIC" id="fig|101510.16.peg.4693"/>
<dbReference type="eggNOG" id="COG2057">
    <property type="taxonomic scope" value="Bacteria"/>
</dbReference>
<dbReference type="HOGENOM" id="CLU_069088_0_0_11"/>
<dbReference type="OrthoDB" id="9813111at2"/>
<dbReference type="SABIO-RK" id="Q0S7Q0"/>
<dbReference type="UniPathway" id="UPA01058"/>
<dbReference type="Proteomes" id="UP000008710">
    <property type="component" value="Chromosome"/>
</dbReference>
<dbReference type="GO" id="GO:0016829">
    <property type="term" value="F:lyase activity"/>
    <property type="evidence" value="ECO:0007669"/>
    <property type="project" value="UniProtKB-KW"/>
</dbReference>
<dbReference type="GO" id="GO:0006707">
    <property type="term" value="P:cholesterol catabolic process"/>
    <property type="evidence" value="ECO:0007669"/>
    <property type="project" value="UniProtKB-UniPathway"/>
</dbReference>
<dbReference type="Gene3D" id="3.40.1080.10">
    <property type="entry name" value="Glutaconate Coenzyme A-transferase"/>
    <property type="match status" value="1"/>
</dbReference>
<dbReference type="InterPro" id="IPR037171">
    <property type="entry name" value="NagB/RpiA_transferase-like"/>
</dbReference>
<dbReference type="PANTHER" id="PTHR43293">
    <property type="entry name" value="ACETATE COA-TRANSFERASE YDIF"/>
    <property type="match status" value="1"/>
</dbReference>
<dbReference type="PANTHER" id="PTHR43293:SF3">
    <property type="entry name" value="CHOLESTEROL RING-CLEAVING HYDROLASE IPDB SUBUNIT"/>
    <property type="match status" value="1"/>
</dbReference>
<dbReference type="SUPFAM" id="SSF100950">
    <property type="entry name" value="NagB/RpiA/CoA transferase-like"/>
    <property type="match status" value="1"/>
</dbReference>
<gene>
    <name evidence="3" type="primary">ipdB</name>
    <name evidence="6" type="ordered locus">RHA1_ro04650</name>
</gene>
<feature type="chain" id="PRO_0000452314" description="Cholesterol ring-cleaving hydrolase IpdB subunit">
    <location>
        <begin position="1"/>
        <end position="253"/>
    </location>
</feature>
<feature type="mutagenesis site" description="20% decrease in activity." evidence="2">
    <original>E</original>
    <variation>A</variation>
    <location>
        <position position="58"/>
    </location>
</feature>
<feature type="mutagenesis site" description="Loss of activity." evidence="2">
    <original>R</original>
    <variation>M</variation>
    <location>
        <position position="92"/>
    </location>
</feature>
<feature type="mutagenesis site" description="Loss of activity." evidence="2">
    <original>R</original>
    <variation>M</variation>
    <location>
        <position position="126"/>
    </location>
</feature>
<feature type="helix" evidence="10">
    <location>
        <begin position="10"/>
        <end position="20"/>
    </location>
</feature>
<feature type="turn" evidence="10">
    <location>
        <begin position="21"/>
        <end position="24"/>
    </location>
</feature>
<feature type="strand" evidence="10">
    <location>
        <begin position="27"/>
        <end position="32"/>
    </location>
</feature>
<feature type="helix" evidence="10">
    <location>
        <begin position="35"/>
        <end position="46"/>
    </location>
</feature>
<feature type="strand" evidence="10">
    <location>
        <begin position="57"/>
        <end position="64"/>
    </location>
</feature>
<feature type="strand" evidence="10">
    <location>
        <begin position="74"/>
        <end position="77"/>
    </location>
</feature>
<feature type="helix" evidence="10">
    <location>
        <begin position="80"/>
        <end position="89"/>
    </location>
</feature>
<feature type="strand" evidence="10">
    <location>
        <begin position="92"/>
        <end position="96"/>
    </location>
</feature>
<feature type="strand" evidence="10">
    <location>
        <begin position="99"/>
        <end position="101"/>
    </location>
</feature>
<feature type="strand" evidence="10">
    <location>
        <begin position="110"/>
        <end position="113"/>
    </location>
</feature>
<feature type="strand" evidence="10">
    <location>
        <begin position="119"/>
        <end position="121"/>
    </location>
</feature>
<feature type="helix" evidence="10">
    <location>
        <begin position="128"/>
        <end position="134"/>
    </location>
</feature>
<feature type="strand" evidence="10">
    <location>
        <begin position="137"/>
        <end position="143"/>
    </location>
</feature>
<feature type="turn" evidence="10">
    <location>
        <begin position="146"/>
        <end position="148"/>
    </location>
</feature>
<feature type="helix" evidence="10">
    <location>
        <begin position="161"/>
        <end position="163"/>
    </location>
</feature>
<feature type="helix" evidence="10">
    <location>
        <begin position="169"/>
        <end position="171"/>
    </location>
</feature>
<feature type="strand" evidence="10">
    <location>
        <begin position="176"/>
        <end position="190"/>
    </location>
</feature>
<feature type="turn" evidence="10">
    <location>
        <begin position="191"/>
        <end position="193"/>
    </location>
</feature>
<feature type="strand" evidence="10">
    <location>
        <begin position="194"/>
        <end position="200"/>
    </location>
</feature>
<feature type="helix" evidence="10">
    <location>
        <begin position="206"/>
        <end position="211"/>
    </location>
</feature>
<feature type="helix" evidence="10">
    <location>
        <begin position="220"/>
        <end position="222"/>
    </location>
</feature>
<feature type="helix" evidence="10">
    <location>
        <begin position="231"/>
        <end position="239"/>
    </location>
</feature>
<feature type="helix" evidence="10">
    <location>
        <begin position="246"/>
        <end position="250"/>
    </location>
</feature>